<protein>
    <recommendedName>
        <fullName>Suppressor protein STP22 of temperature-sensitive alpha-factor receptor and arginine permease</fullName>
    </recommendedName>
    <alternativeName>
        <fullName>ESCRT-I complex subunit VPS23</fullName>
    </alternativeName>
    <alternativeName>
        <fullName>Vacuolar protein sorting-associated protein 23</fullName>
    </alternativeName>
</protein>
<evidence type="ECO:0000255" key="1"/>
<evidence type="ECO:0000255" key="2">
    <source>
        <dbReference type="PROSITE-ProRule" id="PRU00388"/>
    </source>
</evidence>
<evidence type="ECO:0000255" key="3">
    <source>
        <dbReference type="PROSITE-ProRule" id="PRU00644"/>
    </source>
</evidence>
<evidence type="ECO:0000255" key="4">
    <source>
        <dbReference type="PROSITE-ProRule" id="PRU00652"/>
    </source>
</evidence>
<evidence type="ECO:0000256" key="5">
    <source>
        <dbReference type="SAM" id="MobiDB-lite"/>
    </source>
</evidence>
<evidence type="ECO:0000269" key="6">
    <source>
    </source>
</evidence>
<evidence type="ECO:0000269" key="7">
    <source>
    </source>
</evidence>
<evidence type="ECO:0000269" key="8">
    <source>
    </source>
</evidence>
<evidence type="ECO:0000269" key="9">
    <source>
    </source>
</evidence>
<evidence type="ECO:0000269" key="10">
    <source>
    </source>
</evidence>
<evidence type="ECO:0000269" key="11">
    <source>
    </source>
</evidence>
<evidence type="ECO:0000269" key="12">
    <source>
    </source>
</evidence>
<evidence type="ECO:0000269" key="13">
    <source>
    </source>
</evidence>
<evidence type="ECO:0000269" key="14">
    <source>
    </source>
</evidence>
<evidence type="ECO:0000305" key="15"/>
<evidence type="ECO:0007829" key="16">
    <source>
        <dbReference type="PDB" id="2F6M"/>
    </source>
</evidence>
<evidence type="ECO:0007829" key="17">
    <source>
        <dbReference type="PDB" id="2P22"/>
    </source>
</evidence>
<evidence type="ECO:0007829" key="18">
    <source>
        <dbReference type="PDB" id="3R3Q"/>
    </source>
</evidence>
<evidence type="ECO:0007829" key="19">
    <source>
        <dbReference type="PDB" id="3R42"/>
    </source>
</evidence>
<sequence length="385" mass="43330">MSANGKISVPEAVVNWLFKVIQPIYNDGRTTFHDSLALLDNFHSLRPRTRVFTHSDGTPQLLLSIYGTISTGEDGSSPHSIPVIMWVPSMYPVKPPFISINLENFDMNTISSSLPIQEYIDSNGWIALPILHCWDPAAMNLIMVVQELMSLLHEPPQDQAPSLPPKPNTQLQQEQNTPPLPPKPKSPHLKPPLPPPPPPQPASNALDLMDMDNTDISPTNHHEMLQNLQTVVNELYREDVDYVADKILTRQTVMQESIARFHEIIAIDKNHLRAVEQAIEQTMHSLNAQIDVLTANRAKVQQFSSTSHVDDEDVNSIAVAKTDGLNQLYNLVAQDYALTDTIECLSRMLHRGTIPLDTFVKQGRELARQQFLVRWHIQRITSPLS</sequence>
<accession>P25604</accession>
<accession>D6VR04</accession>
<accession>P87010</accession>
<accession>P87279</accession>
<accession>Q86ZT3</accession>
<accession>Q8NIM6</accession>
<organism>
    <name type="scientific">Saccharomyces cerevisiae (strain ATCC 204508 / S288c)</name>
    <name type="common">Baker's yeast</name>
    <dbReference type="NCBI Taxonomy" id="559292"/>
    <lineage>
        <taxon>Eukaryota</taxon>
        <taxon>Fungi</taxon>
        <taxon>Dikarya</taxon>
        <taxon>Ascomycota</taxon>
        <taxon>Saccharomycotina</taxon>
        <taxon>Saccharomycetes</taxon>
        <taxon>Saccharomycetales</taxon>
        <taxon>Saccharomycetaceae</taxon>
        <taxon>Saccharomyces</taxon>
    </lineage>
</organism>
<keyword id="KW-0002">3D-structure</keyword>
<keyword id="KW-0175">Coiled coil</keyword>
<keyword id="KW-0963">Cytoplasm</keyword>
<keyword id="KW-0967">Endosome</keyword>
<keyword id="KW-0472">Membrane</keyword>
<keyword id="KW-0653">Protein transport</keyword>
<keyword id="KW-1185">Reference proteome</keyword>
<keyword id="KW-0813">Transport</keyword>
<comment type="function">
    <text evidence="6 7 8">Component of the ESCRT-I complex, a regulator of vesicular trafficking process. Binds to ubiquitinated cargo proteins and is required for the sorting of endocytic ubiquitinated cargos into multivesicular bodies (MVBs). Mediates the association to the ESCRT-0 complex. Required for vacuolar targeting of temperature-sensitive plasma membrane proteins STE2 and CAN1.</text>
</comment>
<comment type="subunit">
    <text evidence="8 9 11 12 13 14">Component of the ESCRT-I complex (endosomal sorting complex required for transport I) which consists of STP22, VPS28, SRN2 and MVB12 in a 1:1:1:1 stoichiometry. Interacts with HSE1 and VPS27. Interacts with MVB12 and SRN2.</text>
</comment>
<comment type="interaction">
    <interactant intactId="EBI-411625">
        <id>P25604</id>
    </interactant>
    <interactant intactId="EBI-5412">
        <id>Q05080</id>
        <label>HOF1</label>
    </interactant>
    <organismsDiffer>false</organismsDiffer>
    <experiments>2</experiments>
</comment>
<comment type="interaction">
    <interactant intactId="EBI-411625">
        <id>P25604</id>
    </interactant>
    <interactant intactId="EBI-1382">
        <id>P38753</id>
        <label>HSE1</label>
    </interactant>
    <organismsDiffer>false</organismsDiffer>
    <experiments>3</experiments>
</comment>
<comment type="interaction">
    <interactant intactId="EBI-411625">
        <id>P25604</id>
    </interactant>
    <interactant intactId="EBI-22980">
        <id>P43603</id>
        <label>LSB3</label>
    </interactant>
    <organismsDiffer>false</organismsDiffer>
    <experiments>3</experiments>
</comment>
<comment type="interaction">
    <interactant intactId="EBI-411625">
        <id>P25604</id>
    </interactant>
    <interactant intactId="EBI-23478">
        <id>P42939</id>
        <label>MVB12</label>
    </interactant>
    <organismsDiffer>false</organismsDiffer>
    <experiments>13</experiments>
</comment>
<comment type="interaction">
    <interactant intactId="EBI-411625">
        <id>P25604</id>
    </interactant>
    <interactant intactId="EBI-13206">
        <id>P80667</id>
        <label>PEX13</label>
    </interactant>
    <organismsDiffer>false</organismsDiffer>
    <experiments>2</experiments>
</comment>
<comment type="interaction">
    <interactant intactId="EBI-411625">
        <id>P25604</id>
    </interactant>
    <interactant intactId="EBI-18076">
        <id>Q99176</id>
        <label>SRN2</label>
    </interactant>
    <organismsDiffer>false</organismsDiffer>
    <experiments>9</experiments>
</comment>
<comment type="interaction">
    <interactant intactId="EBI-411625">
        <id>P25604</id>
    </interactant>
    <interactant intactId="EBI-20380">
        <id>P40343</id>
        <label>VPS27</label>
    </interactant>
    <organismsDiffer>false</organismsDiffer>
    <experiments>8</experiments>
</comment>
<comment type="interaction">
    <interactant intactId="EBI-411625">
        <id>P25604</id>
    </interactant>
    <interactant intactId="EBI-20387">
        <id>Q02767</id>
        <label>VPS28</label>
    </interactant>
    <organismsDiffer>false</organismsDiffer>
    <experiments>4</experiments>
</comment>
<comment type="interaction">
    <interactant intactId="EBI-411625">
        <id>P25604</id>
    </interactant>
    <interactant intactId="EBI-24460">
        <id>P32793</id>
        <label>YSC84</label>
    </interactant>
    <organismsDiffer>false</organismsDiffer>
    <experiments>2</experiments>
</comment>
<comment type="subcellular location">
    <subcellularLocation>
        <location>Cytoplasm</location>
    </subcellularLocation>
    <subcellularLocation>
        <location>Endosome</location>
    </subcellularLocation>
    <subcellularLocation>
        <location evidence="15">Late endosome membrane</location>
        <topology evidence="15">Peripheral membrane protein</topology>
    </subcellularLocation>
</comment>
<comment type="domain">
    <text>The UEV domain is required for the interaction of the complex with ubiquitin.</text>
</comment>
<comment type="miscellaneous">
    <text evidence="10">Present with 1360 molecules/cell in log phase SD medium.</text>
</comment>
<comment type="similarity">
    <text evidence="2">Belongs to the ubiquitin-conjugating enzyme family. UEV subfamily.</text>
</comment>
<comment type="sequence caution" evidence="15">
    <conflict type="frameshift">
        <sequence resource="EMBL-CDS" id="CAC42964"/>
    </conflict>
</comment>
<name>STP22_YEAST</name>
<reference key="1">
    <citation type="journal article" date="1999" name="Mol. Cell. Biol.">
        <title>Yeast mutants affecting possible quality control of plasma membrane proteins.</title>
        <authorList>
            <person name="Li Y."/>
            <person name="Kane T."/>
            <person name="Tipper C."/>
            <person name="Spatrick P."/>
            <person name="Jenness D.D."/>
        </authorList>
    </citation>
    <scope>NUCLEOTIDE SEQUENCE [GENOMIC DNA]</scope>
    <scope>FUNCTION</scope>
    <scope>SUBCELLULAR LOCATION</scope>
</reference>
<reference key="2">
    <citation type="journal article" date="1992" name="Nature">
        <title>The complete DNA sequence of yeast chromosome III.</title>
        <authorList>
            <person name="Oliver S.G."/>
            <person name="van der Aart Q.J.M."/>
            <person name="Agostoni-Carbone M.L."/>
            <person name="Aigle M."/>
            <person name="Alberghina L."/>
            <person name="Alexandraki D."/>
            <person name="Antoine G."/>
            <person name="Anwar R."/>
            <person name="Ballesta J.P.G."/>
            <person name="Benit P."/>
            <person name="Berben G."/>
            <person name="Bergantino E."/>
            <person name="Biteau N."/>
            <person name="Bolle P.-A."/>
            <person name="Bolotin-Fukuhara M."/>
            <person name="Brown A."/>
            <person name="Brown A.J.P."/>
            <person name="Buhler J.-M."/>
            <person name="Carcano C."/>
            <person name="Carignani G."/>
            <person name="Cederberg H."/>
            <person name="Chanet R."/>
            <person name="Contreras R."/>
            <person name="Crouzet M."/>
            <person name="Daignan-Fornier B."/>
            <person name="Defoor E."/>
            <person name="Delgado M.D."/>
            <person name="Demolder J."/>
            <person name="Doira C."/>
            <person name="Dubois E."/>
            <person name="Dujon B."/>
            <person name="Duesterhoeft A."/>
            <person name="Erdmann D."/>
            <person name="Esteban M."/>
            <person name="Fabre F."/>
            <person name="Fairhead C."/>
            <person name="Faye G."/>
            <person name="Feldmann H."/>
            <person name="Fiers W."/>
            <person name="Francingues-Gaillard M.-C."/>
            <person name="Franco L."/>
            <person name="Frontali L."/>
            <person name="Fukuhara H."/>
            <person name="Fuller L.J."/>
            <person name="Galland P."/>
            <person name="Gent M.E."/>
            <person name="Gigot D."/>
            <person name="Gilliquet V."/>
            <person name="Glansdorff N."/>
            <person name="Goffeau A."/>
            <person name="Grenson M."/>
            <person name="Grisanti P."/>
            <person name="Grivell L.A."/>
            <person name="de Haan M."/>
            <person name="Haasemann M."/>
            <person name="Hatat D."/>
            <person name="Hoenicka J."/>
            <person name="Hegemann J.H."/>
            <person name="Herbert C.J."/>
            <person name="Hilger F."/>
            <person name="Hohmann S."/>
            <person name="Hollenberg C.P."/>
            <person name="Huse K."/>
            <person name="Iborra F."/>
            <person name="Indge K.J."/>
            <person name="Isono K."/>
            <person name="Jacq C."/>
            <person name="Jacquet M."/>
            <person name="James C.M."/>
            <person name="Jauniaux J.-C."/>
            <person name="Jia Y."/>
            <person name="Jimenez A."/>
            <person name="Kelly A."/>
            <person name="Kleinhans U."/>
            <person name="Kreisl P."/>
            <person name="Lanfranchi G."/>
            <person name="Lewis C."/>
            <person name="van der Linden C.G."/>
            <person name="Lucchini G."/>
            <person name="Lutzenkirchen K."/>
            <person name="Maat M.J."/>
            <person name="Mallet L."/>
            <person name="Mannhaupt G."/>
            <person name="Martegani E."/>
            <person name="Mathieu A."/>
            <person name="Maurer C.T.C."/>
            <person name="McConnell D."/>
            <person name="McKee R.A."/>
            <person name="Messenguy F."/>
            <person name="Mewes H.-W."/>
            <person name="Molemans F."/>
            <person name="Montague M.A."/>
            <person name="Muzi Falconi M."/>
            <person name="Navas L."/>
            <person name="Newlon C.S."/>
            <person name="Noone D."/>
            <person name="Pallier C."/>
            <person name="Panzeri L."/>
            <person name="Pearson B.M."/>
            <person name="Perea J."/>
            <person name="Philippsen P."/>
            <person name="Pierard A."/>
            <person name="Planta R.J."/>
            <person name="Plevani P."/>
            <person name="Poetsch B."/>
            <person name="Pohl F.M."/>
            <person name="Purnelle B."/>
            <person name="Ramezani Rad M."/>
            <person name="Rasmussen S.W."/>
            <person name="Raynal A."/>
            <person name="Remacha M.A."/>
            <person name="Richterich P."/>
            <person name="Roberts A.B."/>
            <person name="Rodriguez F."/>
            <person name="Sanz E."/>
            <person name="Schaaff-Gerstenschlaeger I."/>
            <person name="Scherens B."/>
            <person name="Schweitzer B."/>
            <person name="Shu Y."/>
            <person name="Skala J."/>
            <person name="Slonimski P.P."/>
            <person name="Sor F."/>
            <person name="Soustelle C."/>
            <person name="Spiegelberg R."/>
            <person name="Stateva L.I."/>
            <person name="Steensma H.Y."/>
            <person name="Steiner S."/>
            <person name="Thierry A."/>
            <person name="Thireos G."/>
            <person name="Tzermia M."/>
            <person name="Urrestarazu L.A."/>
            <person name="Valle G."/>
            <person name="Vetter I."/>
            <person name="van Vliet-Reedijk J.C."/>
            <person name="Voet M."/>
            <person name="Volckaert G."/>
            <person name="Vreken P."/>
            <person name="Wang H."/>
            <person name="Warmington J.R."/>
            <person name="von Wettstein D."/>
            <person name="Wicksteed B.L."/>
            <person name="Wilson C."/>
            <person name="Wurst H."/>
            <person name="Xu G."/>
            <person name="Yoshikawa A."/>
            <person name="Zimmermann F.K."/>
            <person name="Sgouros J.G."/>
        </authorList>
    </citation>
    <scope>NUCLEOTIDE SEQUENCE [LARGE SCALE GENOMIC DNA]</scope>
    <source>
        <strain>ATCC 204508 / S288c</strain>
    </source>
</reference>
<reference key="3">
    <citation type="submission" date="1996-01" db="EMBL/GenBank/DDBJ databases">
        <authorList>
            <person name="Gromadka R."/>
        </authorList>
    </citation>
    <scope>SEQUENCE REVISION</scope>
</reference>
<reference key="4">
    <citation type="submission" date="2001-06" db="EMBL/GenBank/DDBJ databases">
        <authorList>
            <person name="Valles G."/>
            <person name="Volckaerts G."/>
        </authorList>
    </citation>
    <scope>SEQUENCE REVISION TO N-TERMINUS</scope>
</reference>
<reference key="5">
    <citation type="journal article" date="2014" name="G3 (Bethesda)">
        <title>The reference genome sequence of Saccharomyces cerevisiae: Then and now.</title>
        <authorList>
            <person name="Engel S.R."/>
            <person name="Dietrich F.S."/>
            <person name="Fisk D.G."/>
            <person name="Binkley G."/>
            <person name="Balakrishnan R."/>
            <person name="Costanzo M.C."/>
            <person name="Dwight S.S."/>
            <person name="Hitz B.C."/>
            <person name="Karra K."/>
            <person name="Nash R.S."/>
            <person name="Weng S."/>
            <person name="Wong E.D."/>
            <person name="Lloyd P."/>
            <person name="Skrzypek M.S."/>
            <person name="Miyasato S.R."/>
            <person name="Simison M."/>
            <person name="Cherry J.M."/>
        </authorList>
    </citation>
    <scope>GENOME REANNOTATION</scope>
    <source>
        <strain>ATCC 204508 / S288c</strain>
    </source>
</reference>
<reference key="6">
    <citation type="journal article" date="2003" name="Genome Biol.">
        <title>Reinvestigation of the Saccharomyces cerevisiae genome annotation by comparison to the genome of a related fungus: Ashbya gossypii.</title>
        <authorList>
            <person name="Brachat S."/>
            <person name="Dietrich F.S."/>
            <person name="Voegeli S."/>
            <person name="Zhang Z."/>
            <person name="Stuart L."/>
            <person name="Lerch A."/>
            <person name="Gates K."/>
            <person name="Gaffney T.D."/>
            <person name="Philippsen P."/>
        </authorList>
    </citation>
    <scope>NUCLEOTIDE SEQUENCE [GENOMIC DNA] OF 204-329</scope>
    <source>
        <strain>ATCC 204508 / S288c</strain>
    </source>
</reference>
<reference key="7">
    <citation type="journal article" date="2000" name="Traffic">
        <title>Mammalian tumor susceptibility gene 101 (TSG101) and the yeast homologue, Vps23p, both function in late endosomal trafficking.</title>
        <authorList>
            <person name="Babst M."/>
            <person name="Odorizzi G."/>
            <person name="Estepa E.J."/>
            <person name="Emr S.D."/>
        </authorList>
    </citation>
    <scope>FUNCTION</scope>
    <scope>SUBCELLULAR LOCATION</scope>
</reference>
<reference key="8">
    <citation type="journal article" date="2001" name="Cell">
        <title>Ubiquitin-dependent sorting into the multivesicular body pathway requires the function of a conserved endosomal protein sorting complex, ESCRT-I.</title>
        <authorList>
            <person name="Katzmann D.J."/>
            <person name="Babst M."/>
            <person name="Emr S.D."/>
        </authorList>
    </citation>
    <scope>FUNCTION</scope>
    <scope>SUBUNIT</scope>
    <scope>SUBCELLULAR LOCATION</scope>
    <scope>MUTAGENESIS OF MET-85</scope>
</reference>
<reference key="9">
    <citation type="journal article" date="2003" name="Nature">
        <title>Global analysis of protein expression in yeast.</title>
        <authorList>
            <person name="Ghaemmaghami S."/>
            <person name="Huh W.-K."/>
            <person name="Bower K."/>
            <person name="Howson R.W."/>
            <person name="Belle A."/>
            <person name="Dephoure N."/>
            <person name="O'Shea E.K."/>
            <person name="Weissman J.S."/>
        </authorList>
    </citation>
    <scope>LEVEL OF PROTEIN EXPRESSION [LARGE SCALE ANALYSIS]</scope>
</reference>
<reference key="10">
    <citation type="journal article" date="2003" name="J. Cell Biol.">
        <title>Vps27 recruits ESCRT machinery to endosomes during MVB sorting.</title>
        <authorList>
            <person name="Katzmann D.J."/>
            <person name="Stefan C.J."/>
            <person name="Babst M."/>
            <person name="Emr S.D."/>
        </authorList>
    </citation>
    <scope>SUBCELLULAR LOCATION</scope>
    <scope>INTERACTION WITH VPS27</scope>
</reference>
<reference key="11">
    <citation type="journal article" date="2004" name="Traffic">
        <title>Protein-protein interactions of ESCRT complexes in the yeast Saccharomyces cerevisiae.</title>
        <authorList>
            <person name="Bowers K."/>
            <person name="Lottridge J."/>
            <person name="Helliwell S.B."/>
            <person name="Goldthwaite L.M."/>
            <person name="Luzio J.P."/>
            <person name="Stevens T.H."/>
        </authorList>
    </citation>
    <scope>IDENTIFICATION IN THE ESCRT-1 COMPLEX</scope>
    <scope>INTERACTION WITH HSE1 AND VPS27</scope>
</reference>
<reference key="12">
    <citation type="journal article" date="2004" name="J. Biol. Chem.">
        <title>Structural insights into endosomal sorting complex required for transport (ESCRT-I) recognition of ubiquitinated proteins.</title>
        <authorList>
            <person name="Teo H."/>
            <person name="Veprintsev D.B."/>
            <person name="Williams R.L."/>
        </authorList>
    </citation>
    <scope>X-RAY CRYSTALLOGRAPHY (1.85 ANGSTROMS) OF 1-161</scope>
</reference>
<reference key="13">
    <citation type="journal article" date="2006" name="Cell">
        <title>ESCRT-I core and ESCRT-II GLUE domain structures reveal role for GLUE in linking to ESCRT-I and membranes.</title>
        <authorList>
            <person name="Teo H."/>
            <person name="Gill D.J."/>
            <person name="Sun J."/>
            <person name="Perisic O."/>
            <person name="Veprintsev D.B."/>
            <person name="Vallis Y."/>
            <person name="Emr S.D."/>
            <person name="Williams R.L."/>
        </authorList>
    </citation>
    <scope>X-RAY CRYSTALLOGRAPHY (3.6 ANGSTROMS) OF 305-385 IN COMPLEX WITH VPS28 AND SRN2</scope>
</reference>
<reference key="14">
    <citation type="journal article" date="2006" name="Cell">
        <title>Structural and functional organization of the ESCRT-I trafficking complex.</title>
        <authorList>
            <person name="Kostelansky M.S."/>
            <person name="Sun J."/>
            <person name="Lee S."/>
            <person name="Kim J."/>
            <person name="Ghirlando R."/>
            <person name="Hierro A."/>
            <person name="Emr S.D."/>
            <person name="Hurley J.H."/>
        </authorList>
    </citation>
    <scope>X-RAY CRYSTALLOGRAPHY (2.8 ANGSTROMS) OF 322-385 IN COMPLEX WITH VPS28 AND SRN2</scope>
    <scope>MUTAGENESIS OF LEU-345 AND PHE-371</scope>
</reference>
<reference key="15">
    <citation type="journal article" date="2007" name="Cell">
        <title>Molecular architecture and functional model of the complete yeast ESCRT-I heterotetramer.</title>
        <authorList>
            <person name="Kostelansky M.S."/>
            <person name="Schluter C."/>
            <person name="Tam Y.Y."/>
            <person name="Lee S."/>
            <person name="Ghirlando R."/>
            <person name="Beach B."/>
            <person name="Conibear E."/>
            <person name="Hurley J.H."/>
        </authorList>
    </citation>
    <scope>X-RAY CRYSTALLOGRAPHY (2.7 ANGSTROMS) OF 215-385</scope>
    <scope>COMPOSITION OF THE ESCRT-I COMPLEX</scope>
    <scope>INTERACTION WITH MVB12 AND SRN2</scope>
    <scope>MUTAGENESIS OF MET-254 AND LEU-286</scope>
</reference>
<reference key="16">
    <citation type="journal article" date="2007" name="EMBO J.">
        <title>Structural insight into the ESCRT-I/-II link and its role in MVB trafficking.</title>
        <authorList>
            <person name="Gill D.J."/>
            <person name="Teo H."/>
            <person name="Sun J."/>
            <person name="Perisic O."/>
            <person name="Veprintsev D.B."/>
            <person name="Emr S.D."/>
            <person name="Williams R.L."/>
        </authorList>
    </citation>
    <scope>COMPOSITION OF THE ESCRT-I COMPLEX</scope>
</reference>
<proteinExistence type="evidence at protein level"/>
<dbReference type="EMBL" id="AF004731">
    <property type="protein sequence ID" value="AAB62820.1"/>
    <property type="molecule type" value="Genomic_DNA"/>
</dbReference>
<dbReference type="EMBL" id="X59720">
    <property type="protein sequence ID" value="CAC42964.1"/>
    <property type="status" value="ALT_FRAME"/>
    <property type="molecule type" value="Genomic_DNA"/>
</dbReference>
<dbReference type="EMBL" id="AY260880">
    <property type="protein sequence ID" value="AAP21748.1"/>
    <property type="molecule type" value="Genomic_DNA"/>
</dbReference>
<dbReference type="EMBL" id="BK006937">
    <property type="protein sequence ID" value="DAA07473.1"/>
    <property type="molecule type" value="Genomic_DNA"/>
</dbReference>
<dbReference type="PIR" id="S74288">
    <property type="entry name" value="S74288"/>
</dbReference>
<dbReference type="RefSeq" id="NP_009919.3">
    <property type="nucleotide sequence ID" value="NM_001178657.1"/>
</dbReference>
<dbReference type="PDB" id="1UZX">
    <property type="method" value="X-ray"/>
    <property type="resolution" value="1.85 A"/>
    <property type="chains" value="A=1-161"/>
</dbReference>
<dbReference type="PDB" id="2CAZ">
    <property type="method" value="X-ray"/>
    <property type="resolution" value="3.60 A"/>
    <property type="chains" value="A/D=305-385"/>
</dbReference>
<dbReference type="PDB" id="2F66">
    <property type="method" value="X-ray"/>
    <property type="resolution" value="2.80 A"/>
    <property type="chains" value="A/D=322-385"/>
</dbReference>
<dbReference type="PDB" id="2F6M">
    <property type="method" value="X-ray"/>
    <property type="resolution" value="2.10 A"/>
    <property type="chains" value="A/C=322-385"/>
</dbReference>
<dbReference type="PDB" id="2P22">
    <property type="method" value="X-ray"/>
    <property type="resolution" value="2.70 A"/>
    <property type="chains" value="A=215-385"/>
</dbReference>
<dbReference type="PDB" id="3R3Q">
    <property type="method" value="X-ray"/>
    <property type="resolution" value="1.45 A"/>
    <property type="chains" value="A=1-160"/>
</dbReference>
<dbReference type="PDB" id="3R42">
    <property type="method" value="X-ray"/>
    <property type="resolution" value="1.87 A"/>
    <property type="chains" value="A=1-160"/>
</dbReference>
<dbReference type="PDBsum" id="1UZX"/>
<dbReference type="PDBsum" id="2CAZ"/>
<dbReference type="PDBsum" id="2F66"/>
<dbReference type="PDBsum" id="2F6M"/>
<dbReference type="PDBsum" id="2P22"/>
<dbReference type="PDBsum" id="3R3Q"/>
<dbReference type="PDBsum" id="3R42"/>
<dbReference type="SMR" id="P25604"/>
<dbReference type="BioGRID" id="30973">
    <property type="interactions" value="488"/>
</dbReference>
<dbReference type="ComplexPortal" id="CPX-940">
    <property type="entry name" value="ESCRT-I complex"/>
</dbReference>
<dbReference type="DIP" id="DIP-5827N"/>
<dbReference type="FunCoup" id="P25604">
    <property type="interactions" value="703"/>
</dbReference>
<dbReference type="IntAct" id="P25604">
    <property type="interactions" value="10"/>
</dbReference>
<dbReference type="MINT" id="P25604"/>
<dbReference type="STRING" id="4932.YCL008C"/>
<dbReference type="TCDB" id="3.A.31.1.1">
    <property type="family name" value="the endosomal sorting complexes required for transport iii (escrt-iii) family"/>
</dbReference>
<dbReference type="iPTMnet" id="P25604"/>
<dbReference type="PaxDb" id="4932-YCL008C"/>
<dbReference type="PeptideAtlas" id="P25604"/>
<dbReference type="EnsemblFungi" id="YCL008C_mRNA">
    <property type="protein sequence ID" value="YCL008C"/>
    <property type="gene ID" value="YCL008C"/>
</dbReference>
<dbReference type="GeneID" id="850349"/>
<dbReference type="KEGG" id="sce:YCL008C"/>
<dbReference type="AGR" id="SGD:S000000514"/>
<dbReference type="SGD" id="S000000514">
    <property type="gene designation" value="STP22"/>
</dbReference>
<dbReference type="VEuPathDB" id="FungiDB:YCL008C"/>
<dbReference type="eggNOG" id="KOG2391">
    <property type="taxonomic scope" value="Eukaryota"/>
</dbReference>
<dbReference type="GeneTree" id="ENSGT00940000153903"/>
<dbReference type="HOGENOM" id="CLU_046554_0_0_1"/>
<dbReference type="InParanoid" id="P25604"/>
<dbReference type="OMA" id="YMNFPQP"/>
<dbReference type="OrthoDB" id="306304at2759"/>
<dbReference type="BioCyc" id="YEAST:G3O-29278-MONOMER"/>
<dbReference type="Reactome" id="R-SCE-917729">
    <property type="pathway name" value="Endosomal Sorting Complex Required For Transport (ESCRT)"/>
</dbReference>
<dbReference type="BioGRID-ORCS" id="850349">
    <property type="hits" value="8 hits in 10 CRISPR screens"/>
</dbReference>
<dbReference type="CD-CODE" id="290133E7">
    <property type="entry name" value="ESCRTs"/>
</dbReference>
<dbReference type="EvolutionaryTrace" id="P25604"/>
<dbReference type="PRO" id="PR:P25604"/>
<dbReference type="Proteomes" id="UP000002311">
    <property type="component" value="Chromosome III"/>
</dbReference>
<dbReference type="RNAct" id="P25604">
    <property type="molecule type" value="protein"/>
</dbReference>
<dbReference type="GO" id="GO:0009898">
    <property type="term" value="C:cytoplasmic side of plasma membrane"/>
    <property type="evidence" value="ECO:0000314"/>
    <property type="project" value="SGD"/>
</dbReference>
<dbReference type="GO" id="GO:0005829">
    <property type="term" value="C:cytosol"/>
    <property type="evidence" value="ECO:0007005"/>
    <property type="project" value="SGD"/>
</dbReference>
<dbReference type="GO" id="GO:0005768">
    <property type="term" value="C:endosome"/>
    <property type="evidence" value="ECO:0000314"/>
    <property type="project" value="UniProtKB"/>
</dbReference>
<dbReference type="GO" id="GO:0000813">
    <property type="term" value="C:ESCRT I complex"/>
    <property type="evidence" value="ECO:0000314"/>
    <property type="project" value="SGD"/>
</dbReference>
<dbReference type="GO" id="GO:0031902">
    <property type="term" value="C:late endosome membrane"/>
    <property type="evidence" value="ECO:0007669"/>
    <property type="project" value="UniProtKB-SubCell"/>
</dbReference>
<dbReference type="GO" id="GO:0043130">
    <property type="term" value="F:ubiquitin binding"/>
    <property type="evidence" value="ECO:0000314"/>
    <property type="project" value="SGD"/>
</dbReference>
<dbReference type="GO" id="GO:1904669">
    <property type="term" value="P:ATP export"/>
    <property type="evidence" value="ECO:0000315"/>
    <property type="project" value="SGD"/>
</dbReference>
<dbReference type="GO" id="GO:0045324">
    <property type="term" value="P:late endosome to vacuole transport"/>
    <property type="evidence" value="ECO:0000315"/>
    <property type="project" value="SGD"/>
</dbReference>
<dbReference type="GO" id="GO:1902915">
    <property type="term" value="P:negative regulation of protein polyubiquitination"/>
    <property type="evidence" value="ECO:0000315"/>
    <property type="project" value="SGD"/>
</dbReference>
<dbReference type="GO" id="GO:0036211">
    <property type="term" value="P:protein modification process"/>
    <property type="evidence" value="ECO:0007669"/>
    <property type="project" value="InterPro"/>
</dbReference>
<dbReference type="GO" id="GO:0006612">
    <property type="term" value="P:protein targeting to membrane"/>
    <property type="evidence" value="ECO:0000315"/>
    <property type="project" value="UniProtKB"/>
</dbReference>
<dbReference type="GO" id="GO:0006623">
    <property type="term" value="P:protein targeting to vacuole"/>
    <property type="evidence" value="ECO:0000315"/>
    <property type="project" value="UniProtKB"/>
</dbReference>
<dbReference type="GO" id="GO:0061709">
    <property type="term" value="P:reticulophagy"/>
    <property type="evidence" value="ECO:0000314"/>
    <property type="project" value="SGD"/>
</dbReference>
<dbReference type="GO" id="GO:0043162">
    <property type="term" value="P:ubiquitin-dependent protein catabolic process via the multivesicular body sorting pathway"/>
    <property type="evidence" value="ECO:0000314"/>
    <property type="project" value="ComplexPortal"/>
</dbReference>
<dbReference type="CDD" id="cd11685">
    <property type="entry name" value="UEV_TSG101-like"/>
    <property type="match status" value="1"/>
</dbReference>
<dbReference type="Gene3D" id="6.10.140.820">
    <property type="match status" value="1"/>
</dbReference>
<dbReference type="Gene3D" id="3.10.110.10">
    <property type="entry name" value="Ubiquitin Conjugating Enzyme"/>
    <property type="match status" value="1"/>
</dbReference>
<dbReference type="InterPro" id="IPR052070">
    <property type="entry name" value="ESCRT-I_UEV_domain"/>
</dbReference>
<dbReference type="InterPro" id="IPR037202">
    <property type="entry name" value="ESCRT_assembly_dom"/>
</dbReference>
<dbReference type="InterPro" id="IPR017916">
    <property type="entry name" value="SB_dom"/>
</dbReference>
<dbReference type="InterPro" id="IPR016135">
    <property type="entry name" value="UBQ-conjugating_enzyme/RWD"/>
</dbReference>
<dbReference type="InterPro" id="IPR008883">
    <property type="entry name" value="UEV_N"/>
</dbReference>
<dbReference type="PANTHER" id="PTHR23306:SF3">
    <property type="entry name" value="TUMOR SUPPRESSOR PROTEIN 101"/>
    <property type="match status" value="1"/>
</dbReference>
<dbReference type="PANTHER" id="PTHR23306">
    <property type="entry name" value="TUMOR SUSCEPTIBILITY GENE 101 PROTEIN-RELATED"/>
    <property type="match status" value="1"/>
</dbReference>
<dbReference type="Pfam" id="PF05743">
    <property type="entry name" value="UEV"/>
    <property type="match status" value="1"/>
</dbReference>
<dbReference type="Pfam" id="PF09454">
    <property type="entry name" value="Vps23_core"/>
    <property type="match status" value="1"/>
</dbReference>
<dbReference type="SMART" id="SM00212">
    <property type="entry name" value="UBCc"/>
    <property type="match status" value="1"/>
</dbReference>
<dbReference type="SUPFAM" id="SSF140111">
    <property type="entry name" value="Endosomal sorting complex assembly domain"/>
    <property type="match status" value="1"/>
</dbReference>
<dbReference type="SUPFAM" id="SSF54495">
    <property type="entry name" value="UBC-like"/>
    <property type="match status" value="1"/>
</dbReference>
<dbReference type="PROSITE" id="PS51312">
    <property type="entry name" value="SB"/>
    <property type="match status" value="1"/>
</dbReference>
<dbReference type="PROSITE" id="PS51322">
    <property type="entry name" value="UEV"/>
    <property type="match status" value="1"/>
</dbReference>
<gene>
    <name type="primary">STP22</name>
    <name type="synonym">VPS23</name>
    <name type="ordered locus">YCL008C</name>
    <name type="ORF">YCL8C</name>
</gene>
<feature type="chain" id="PRO_0000082605" description="Suppressor protein STP22 of temperature-sensitive alpha-factor receptor and arginine permease">
    <location>
        <begin position="1"/>
        <end position="385"/>
    </location>
</feature>
<feature type="domain" description="UEV" evidence="4">
    <location>
        <begin position="12"/>
        <end position="161"/>
    </location>
</feature>
<feature type="domain" description="SB" evidence="3">
    <location>
        <begin position="322"/>
        <end position="385"/>
    </location>
</feature>
<feature type="region of interest" description="Disordered" evidence="5">
    <location>
        <begin position="155"/>
        <end position="219"/>
    </location>
</feature>
<feature type="coiled-coil region" evidence="1">
    <location>
        <begin position="272"/>
        <end position="300"/>
    </location>
</feature>
<feature type="compositionally biased region" description="Polar residues" evidence="5">
    <location>
        <begin position="168"/>
        <end position="177"/>
    </location>
</feature>
<feature type="compositionally biased region" description="Pro residues" evidence="5">
    <location>
        <begin position="178"/>
        <end position="201"/>
    </location>
</feature>
<feature type="mutagenesis site" description="No interaction of the ESCRT-I complex with ubiquitin." evidence="8">
    <original>M</original>
    <variation>T</variation>
    <location>
        <position position="85"/>
    </location>
</feature>
<feature type="mutagenesis site" description="Defective in ESCRT-I cargo sorting; reduces MVB12 localization to MVBs; abolishes interaction with MVB12; reduces interaction with SRN2." evidence="14">
    <original>M</original>
    <variation>D</variation>
    <location>
        <position position="254"/>
    </location>
</feature>
<feature type="mutagenesis site" description="Defective in ESCRT-I cargo sorting." evidence="14">
    <original>L</original>
    <variation>D</variation>
    <location>
        <position position="286"/>
    </location>
</feature>
<feature type="mutagenesis site" description="Abolishes ESCRT-I complex assembly; class E phenotype (malformed late MVBs)." evidence="13">
    <original>L</original>
    <variation>D</variation>
    <location>
        <position position="345"/>
    </location>
</feature>
<feature type="mutagenesis site" description="Abolishes ESCRT-I complex assembly; class E phenotype (malformed late MVBs)." evidence="13">
    <original>F</original>
    <variation>D</variation>
    <location>
        <position position="371"/>
    </location>
</feature>
<feature type="helix" evidence="18">
    <location>
        <begin position="11"/>
        <end position="21"/>
    </location>
</feature>
<feature type="turn" evidence="18">
    <location>
        <begin position="22"/>
        <end position="24"/>
    </location>
</feature>
<feature type="helix" evidence="18">
    <location>
        <begin position="28"/>
        <end position="41"/>
    </location>
</feature>
<feature type="strand" evidence="18">
    <location>
        <begin position="45"/>
        <end position="53"/>
    </location>
</feature>
<feature type="strand" evidence="18">
    <location>
        <begin position="59"/>
        <end position="70"/>
    </location>
</feature>
<feature type="strand" evidence="19">
    <location>
        <begin position="73"/>
        <end position="76"/>
    </location>
</feature>
<feature type="strand" evidence="18">
    <location>
        <begin position="80"/>
        <end position="86"/>
    </location>
</feature>
<feature type="turn" evidence="18">
    <location>
        <begin position="89"/>
        <end position="93"/>
    </location>
</feature>
<feature type="strand" evidence="18">
    <location>
        <begin position="97"/>
        <end position="100"/>
    </location>
</feature>
<feature type="helix" evidence="18">
    <location>
        <begin position="102"/>
        <end position="104"/>
    </location>
</feature>
<feature type="turn" evidence="18">
    <location>
        <begin position="107"/>
        <end position="109"/>
    </location>
</feature>
<feature type="helix" evidence="18">
    <location>
        <begin position="116"/>
        <end position="119"/>
    </location>
</feature>
<feature type="strand" evidence="18">
    <location>
        <begin position="124"/>
        <end position="126"/>
    </location>
</feature>
<feature type="helix" evidence="18">
    <location>
        <begin position="129"/>
        <end position="132"/>
    </location>
</feature>
<feature type="helix" evidence="18">
    <location>
        <begin position="136"/>
        <end position="138"/>
    </location>
</feature>
<feature type="helix" evidence="18">
    <location>
        <begin position="141"/>
        <end position="150"/>
    </location>
</feature>
<feature type="helix" evidence="17">
    <location>
        <begin position="219"/>
        <end position="246"/>
    </location>
</feature>
<feature type="helix" evidence="17">
    <location>
        <begin position="248"/>
        <end position="251"/>
    </location>
</feature>
<feature type="helix" evidence="17">
    <location>
        <begin position="254"/>
        <end position="289"/>
    </location>
</feature>
<feature type="helix" evidence="17">
    <location>
        <begin position="291"/>
        <end position="303"/>
    </location>
</feature>
<feature type="helix" evidence="17">
    <location>
        <begin position="314"/>
        <end position="316"/>
    </location>
</feature>
<feature type="helix" evidence="16">
    <location>
        <begin position="323"/>
        <end position="351"/>
    </location>
</feature>
<feature type="helix" evidence="16">
    <location>
        <begin position="356"/>
        <end position="381"/>
    </location>
</feature>
<feature type="turn" evidence="16">
    <location>
        <begin position="382"/>
        <end position="384"/>
    </location>
</feature>